<evidence type="ECO:0000256" key="1">
    <source>
        <dbReference type="SAM" id="MobiDB-lite"/>
    </source>
</evidence>
<evidence type="ECO:0000269" key="2">
    <source>
    </source>
</evidence>
<evidence type="ECO:0000303" key="3">
    <source>
    </source>
</evidence>
<evidence type="ECO:0000303" key="4">
    <source>
    </source>
</evidence>
<evidence type="ECO:0000305" key="5"/>
<evidence type="ECO:0000305" key="6">
    <source>
    </source>
</evidence>
<evidence type="ECO:0000312" key="7">
    <source>
        <dbReference type="HGNC" id="HGNC:11328"/>
    </source>
</evidence>
<evidence type="ECO:0007744" key="8">
    <source>
        <dbReference type="PDB" id="6HCZ"/>
    </source>
</evidence>
<evidence type="ECO:0007744" key="9">
    <source>
    </source>
</evidence>
<evidence type="ECO:0007744" key="10">
    <source>
    </source>
</evidence>
<evidence type="ECO:0007744" key="11">
    <source>
    </source>
</evidence>
<evidence type="ECO:0007829" key="12">
    <source>
        <dbReference type="PDB" id="6HCZ"/>
    </source>
</evidence>
<comment type="function">
    <text evidence="6">Might play a role in mitosis. Antigenic molecule. Could be a centromere-associated protein. May induce anti-centromere antibodies.</text>
</comment>
<comment type="cofactor">
    <cofactor evidence="2">
        <name>Zn(2+)</name>
        <dbReference type="ChEBI" id="CHEBI:29105"/>
    </cofactor>
    <text evidence="2">Binds 1 zinc ion per subunit.</text>
</comment>
<comment type="subunit">
    <text evidence="2">Homodimer.</text>
</comment>
<comment type="interaction">
    <interactant intactId="EBI-741415">
        <id>O60232</id>
    </interactant>
    <interactant intactId="EBI-77797">
        <id>P35609</id>
        <label>ACTN2</label>
    </interactant>
    <organismsDiffer>false</organismsDiffer>
    <experiments>3</experiments>
</comment>
<comment type="interaction">
    <interactant intactId="EBI-741415">
        <id>O60232</id>
    </interactant>
    <interactant intactId="EBI-741406">
        <id>P51946</id>
        <label>CCNH</label>
    </interactant>
    <organismsDiffer>false</organismsDiffer>
    <experiments>4</experiments>
</comment>
<comment type="interaction">
    <interactant intactId="EBI-741415">
        <id>O60232</id>
    </interactant>
    <interactant intactId="EBI-357407">
        <id>P78371</id>
        <label>CCT2</label>
    </interactant>
    <organismsDiffer>false</organismsDiffer>
    <experiments>6</experiments>
</comment>
<comment type="interaction">
    <interactant intactId="EBI-741415">
        <id>O60232</id>
    </interactant>
    <interactant intactId="EBI-356673">
        <id>P49368</id>
        <label>CCT3</label>
    </interactant>
    <organismsDiffer>false</organismsDiffer>
    <experiments>6</experiments>
</comment>
<comment type="interaction">
    <interactant intactId="EBI-741415">
        <id>O60232</id>
    </interactant>
    <interactant intactId="EBI-355710">
        <id>P48643</id>
        <label>CCT5</label>
    </interactant>
    <organismsDiffer>false</organismsDiffer>
    <experiments>5</experiments>
</comment>
<comment type="interaction">
    <interactant intactId="EBI-741415">
        <id>O60232</id>
    </interactant>
    <interactant intactId="EBI-357046">
        <id>Q99832</id>
        <label>CCT7</label>
    </interactant>
    <organismsDiffer>false</organismsDiffer>
    <experiments>8</experiments>
</comment>
<comment type="interaction">
    <interactant intactId="EBI-741415">
        <id>O60232</id>
    </interactant>
    <interactant intactId="EBI-10330207">
        <id>V9HW96</id>
        <label>HEL-S-100n</label>
    </interactant>
    <organismsDiffer>false</organismsDiffer>
    <experiments>3</experiments>
</comment>
<comment type="interaction">
    <interactant intactId="EBI-741415">
        <id>O60232</id>
    </interactant>
    <interactant intactId="EBI-10186233">
        <id>V9HW37</id>
        <label>HEL-S-69</label>
    </interactant>
    <organismsDiffer>false</organismsDiffer>
    <experiments>3</experiments>
</comment>
<comment type="interaction">
    <interactant intactId="EBI-741415">
        <id>O60232</id>
    </interactant>
    <interactant intactId="EBI-6509505">
        <id>Q0VD86</id>
        <label>INCA1</label>
    </interactant>
    <organismsDiffer>false</organismsDiffer>
    <experiments>3</experiments>
</comment>
<comment type="interaction">
    <interactant intactId="EBI-741415">
        <id>O60232</id>
    </interactant>
    <interactant intactId="EBI-348567">
        <id>O75928-2</id>
        <label>PIAS2</label>
    </interactant>
    <organismsDiffer>false</organismsDiffer>
    <experiments>3</experiments>
</comment>
<comment type="interaction">
    <interactant intactId="EBI-741415">
        <id>O60232</id>
    </interactant>
    <interactant intactId="EBI-2340927">
        <id>P78317</id>
        <label>RNF4</label>
    </interactant>
    <organismsDiffer>false</organismsDiffer>
    <experiments>3</experiments>
</comment>
<comment type="interaction">
    <interactant intactId="EBI-741415">
        <id>O60232</id>
    </interactant>
    <interactant intactId="EBI-749483">
        <id>O75971</id>
        <label>SNAPC5</label>
    </interactant>
    <organismsDiffer>false</organismsDiffer>
    <experiments>3</experiments>
</comment>
<comment type="interaction">
    <interactant intactId="EBI-741415">
        <id>O60232</id>
    </interactant>
    <interactant intactId="EBI-10175576">
        <id>G2XKQ0</id>
        <label>SUMO1P1</label>
    </interactant>
    <organismsDiffer>false</organismsDiffer>
    <experiments>3</experiments>
</comment>
<comment type="interaction">
    <interactant intactId="EBI-741415">
        <id>O60232</id>
    </interactant>
    <interactant intactId="EBI-765817">
        <id>Q9Y228</id>
        <label>TRAF3IP3</label>
    </interactant>
    <organismsDiffer>false</organismsDiffer>
    <experiments>3</experiments>
</comment>
<comment type="interaction">
    <interactant intactId="EBI-741415">
        <id>O60232</id>
    </interactant>
    <interactant intactId="EBI-10180829">
        <id>Q7KZS0</id>
        <label>UBE2I</label>
    </interactant>
    <organismsDiffer>false</organismsDiffer>
    <experiments>3</experiments>
</comment>
<comment type="interaction">
    <interactant intactId="EBI-741415">
        <id>O60232</id>
    </interactant>
    <interactant intactId="EBI-17634549">
        <id>Q9UJ78-2</id>
        <label>ZMYM5</label>
    </interactant>
    <organismsDiffer>false</organismsDiffer>
    <experiments>3</experiments>
</comment>
<comment type="interaction">
    <interactant intactId="EBI-741415">
        <id>O60232</id>
    </interactant>
    <interactant intactId="EBI-6248094">
        <id>Q9Q2G4</id>
        <label>ORF</label>
    </interactant>
    <organismsDiffer>true</organismsDiffer>
    <experiments>4</experiments>
</comment>
<comment type="subcellular location">
    <subcellularLocation>
        <location evidence="2">Cytoplasm</location>
    </subcellularLocation>
</comment>
<feature type="initiator methionine" description="Removed" evidence="10 11">
    <location>
        <position position="1"/>
    </location>
</feature>
<feature type="chain" id="PRO_0000072201" description="Protein ZNRD2">
    <location>
        <begin position="2"/>
        <end position="199"/>
    </location>
</feature>
<feature type="region of interest" description="Disordered" evidence="1">
    <location>
        <begin position="100"/>
        <end position="125"/>
    </location>
</feature>
<feature type="short sequence motif" description="Nuclear export signal" evidence="2">
    <location>
        <begin position="173"/>
        <end position="194"/>
    </location>
</feature>
<feature type="binding site" evidence="2 8">
    <location>
        <position position="53"/>
    </location>
    <ligand>
        <name>Zn(2+)</name>
        <dbReference type="ChEBI" id="CHEBI:29105"/>
    </ligand>
</feature>
<feature type="binding site" evidence="2 8">
    <location>
        <position position="56"/>
    </location>
    <ligand>
        <name>Zn(2+)</name>
        <dbReference type="ChEBI" id="CHEBI:29105"/>
    </ligand>
</feature>
<feature type="binding site" evidence="2 8">
    <location>
        <position position="70"/>
    </location>
    <ligand>
        <name>Zn(2+)</name>
        <dbReference type="ChEBI" id="CHEBI:29105"/>
    </ligand>
</feature>
<feature type="binding site" evidence="2 8">
    <location>
        <position position="73"/>
    </location>
    <ligand>
        <name>Zn(2+)</name>
        <dbReference type="ChEBI" id="CHEBI:29105"/>
    </ligand>
</feature>
<feature type="modified residue" description="N-acetylalanine" evidence="10 11">
    <location>
        <position position="2"/>
    </location>
</feature>
<feature type="modified residue" description="Phosphoserine" evidence="9">
    <location>
        <position position="94"/>
    </location>
</feature>
<feature type="sequence variant" id="VAR_051383" description="In dbSNP:rs35971725.">
    <original>T</original>
    <variation>M</variation>
    <location>
        <position position="21"/>
    </location>
</feature>
<feature type="mutagenesis site" description="Cytoplasmic subcellular location." evidence="2">
    <location>
        <begin position="2"/>
        <end position="148"/>
    </location>
</feature>
<feature type="mutagenesis site" description="Cytoplasmic subcellular location." evidence="2">
    <location>
        <begin position="2"/>
        <end position="84"/>
    </location>
</feature>
<feature type="mutagenesis site" description="Ubiquitous intracellular location." evidence="2">
    <location>
        <begin position="85"/>
        <end position="199"/>
    </location>
</feature>
<feature type="mutagenesis site" description="Ubiquitous intracellular location." evidence="2">
    <location>
        <begin position="148"/>
        <end position="199"/>
    </location>
</feature>
<feature type="mutagenesis site" description="Ubiquitous intracellular location." evidence="2">
    <location>
        <begin position="173"/>
        <end position="199"/>
    </location>
</feature>
<feature type="mutagenesis site" description="Ubiquitous intracellular location; when associated with A-183; A-184; A-191; A-194 and A-197.">
    <original>L</original>
    <variation>A</variation>
    <location>
        <position position="180"/>
    </location>
</feature>
<feature type="mutagenesis site" description="Ubiquitous intracellular location; when associated with A-180; A-184; A-191; A-194 and A-197.">
    <original>L</original>
    <variation>A</variation>
    <location>
        <position position="183"/>
    </location>
</feature>
<feature type="mutagenesis site" description="Ubiquitous intracellular location; when associated with A-180; A-183; A-191; A-194 and A-197.">
    <original>I</original>
    <variation>A</variation>
    <location>
        <position position="184"/>
    </location>
</feature>
<feature type="mutagenesis site" description="Ubiquitous intracellular location; when associated with A-180; A-183; A-184; A-194 and A-197.">
    <original>L</original>
    <variation>A</variation>
    <location>
        <position position="191"/>
    </location>
</feature>
<feature type="mutagenesis site" description="Ubiquitous intracellular location; when associated with A-180; A-183; A-184; A-191 and A-197.">
    <original>L</original>
    <variation>A</variation>
    <location>
        <position position="194"/>
    </location>
</feature>
<feature type="mutagenesis site" description="Ubiquitous intracellular location; when associated with A-180; A-183; A-184; A-191 and A-194.">
    <original>L</original>
    <variation>A</variation>
    <location>
        <position position="197"/>
    </location>
</feature>
<feature type="helix" evidence="12">
    <location>
        <begin position="18"/>
        <end position="43"/>
    </location>
</feature>
<feature type="strand" evidence="12">
    <location>
        <begin position="47"/>
        <end position="52"/>
    </location>
</feature>
<feature type="turn" evidence="12">
    <location>
        <begin position="54"/>
        <end position="56"/>
    </location>
</feature>
<feature type="strand" evidence="12">
    <location>
        <begin position="59"/>
        <end position="62"/>
    </location>
</feature>
<feature type="turn" evidence="12">
    <location>
        <begin position="71"/>
        <end position="75"/>
    </location>
</feature>
<protein>
    <recommendedName>
        <fullName evidence="5">Protein ZNRD2</fullName>
    </recommendedName>
    <alternativeName>
        <fullName evidence="3 4">Autoantigen p27</fullName>
    </alternativeName>
    <alternativeName>
        <fullName evidence="3">Protein zinc ribbon domain type 2</fullName>
    </alternativeName>
    <alternativeName>
        <fullName evidence="3">Sjoegren syndrome/scleroderma autoantigen 1</fullName>
    </alternativeName>
    <alternativeName>
        <fullName evidence="5">Zinc ribbon domain-containing protein 2</fullName>
    </alternativeName>
</protein>
<sequence>MALNGAEVDDFSWEPPTEAETKVLQARRERQDRISRLMGDYLLRGYRMLGETCADCGTILLQDKQRKIYCVACQELDSDVDKDNPALNAQAALSQAREHQLASASELPLGSRPAPQPPVPRPEHCEGAAAGLKAAQGPPAPAVPPNTDVMACTQTALLQKLTWASAELGSSTSLETSIQLCGLIRACAEALRSLQQLQH</sequence>
<dbReference type="EMBL" id="AB001740">
    <property type="protein sequence ID" value="BAA25263.1"/>
    <property type="molecule type" value="mRNA"/>
</dbReference>
<dbReference type="EMBL" id="BC014791">
    <property type="protein sequence ID" value="AAH14791.1"/>
    <property type="molecule type" value="mRNA"/>
</dbReference>
<dbReference type="CCDS" id="CCDS8104.1"/>
<dbReference type="RefSeq" id="NP_006387.1">
    <property type="nucleotide sequence ID" value="NM_006396.3"/>
</dbReference>
<dbReference type="PDB" id="6HCZ">
    <property type="method" value="X-ray"/>
    <property type="resolution" value="2.30 A"/>
    <property type="chains" value="A/B=1-199"/>
</dbReference>
<dbReference type="PDBsum" id="6HCZ"/>
<dbReference type="SMR" id="O60232"/>
<dbReference type="BioGRID" id="115788">
    <property type="interactions" value="311"/>
</dbReference>
<dbReference type="FunCoup" id="O60232">
    <property type="interactions" value="1045"/>
</dbReference>
<dbReference type="IntAct" id="O60232">
    <property type="interactions" value="210"/>
</dbReference>
<dbReference type="STRING" id="9606.ENSP00000312318"/>
<dbReference type="ChEMBL" id="CHEMBL4105996"/>
<dbReference type="GlyGen" id="O60232">
    <property type="glycosylation" value="1 site, 1 O-linked glycan (1 site)"/>
</dbReference>
<dbReference type="iPTMnet" id="O60232"/>
<dbReference type="PhosphoSitePlus" id="O60232"/>
<dbReference type="BioMuta" id="SSSCA1"/>
<dbReference type="jPOST" id="O60232"/>
<dbReference type="MassIVE" id="O60232"/>
<dbReference type="PaxDb" id="9606-ENSP00000312318"/>
<dbReference type="PeptideAtlas" id="O60232"/>
<dbReference type="ProteomicsDB" id="49259"/>
<dbReference type="Pumba" id="O60232"/>
<dbReference type="Antibodypedia" id="29847">
    <property type="antibodies" value="181 antibodies from 24 providers"/>
</dbReference>
<dbReference type="DNASU" id="10534"/>
<dbReference type="Ensembl" id="ENST00000309328.8">
    <property type="protein sequence ID" value="ENSP00000312318.3"/>
    <property type="gene ID" value="ENSG00000173465.8"/>
</dbReference>
<dbReference type="GeneID" id="10534"/>
<dbReference type="KEGG" id="hsa:10534"/>
<dbReference type="MANE-Select" id="ENST00000309328.8">
    <property type="protein sequence ID" value="ENSP00000312318.3"/>
    <property type="RefSeq nucleotide sequence ID" value="NM_006396.3"/>
    <property type="RefSeq protein sequence ID" value="NP_006387.1"/>
</dbReference>
<dbReference type="UCSC" id="uc001oek.4">
    <property type="organism name" value="human"/>
</dbReference>
<dbReference type="AGR" id="HGNC:11328"/>
<dbReference type="CTD" id="10534"/>
<dbReference type="DisGeNET" id="10534"/>
<dbReference type="GeneCards" id="ZNRD2"/>
<dbReference type="HGNC" id="HGNC:11328">
    <property type="gene designation" value="ZNRD2"/>
</dbReference>
<dbReference type="HPA" id="ENSG00000173465">
    <property type="expression patterns" value="Low tissue specificity"/>
</dbReference>
<dbReference type="MIM" id="606044">
    <property type="type" value="gene"/>
</dbReference>
<dbReference type="neXtProt" id="NX_O60232"/>
<dbReference type="OpenTargets" id="ENSG00000173465"/>
<dbReference type="PharmGKB" id="PA36152"/>
<dbReference type="VEuPathDB" id="HostDB:ENSG00000173465"/>
<dbReference type="eggNOG" id="KOG4537">
    <property type="taxonomic scope" value="Eukaryota"/>
</dbReference>
<dbReference type="GeneTree" id="ENSGT00390000013169"/>
<dbReference type="HOGENOM" id="CLU_058702_0_0_1"/>
<dbReference type="InParanoid" id="O60232"/>
<dbReference type="OMA" id="TYCVACQ"/>
<dbReference type="OrthoDB" id="28939at2759"/>
<dbReference type="PAN-GO" id="O60232">
    <property type="GO annotations" value="0 GO annotations based on evolutionary models"/>
</dbReference>
<dbReference type="PhylomeDB" id="O60232"/>
<dbReference type="TreeFam" id="TF320182"/>
<dbReference type="PathwayCommons" id="O60232"/>
<dbReference type="SignaLink" id="O60232"/>
<dbReference type="BioGRID-ORCS" id="10534">
    <property type="hits" value="58 hits in 1154 CRISPR screens"/>
</dbReference>
<dbReference type="ChiTaRS" id="SSSCA1">
    <property type="organism name" value="human"/>
</dbReference>
<dbReference type="GenomeRNAi" id="10534"/>
<dbReference type="Pharos" id="O60232">
    <property type="development level" value="Tdark"/>
</dbReference>
<dbReference type="PRO" id="PR:O60232"/>
<dbReference type="Proteomes" id="UP000005640">
    <property type="component" value="Chromosome 11"/>
</dbReference>
<dbReference type="RNAct" id="O60232">
    <property type="molecule type" value="protein"/>
</dbReference>
<dbReference type="Bgee" id="ENSG00000173465">
    <property type="expression patterns" value="Expressed in body of pancreas and 115 other cell types or tissues"/>
</dbReference>
<dbReference type="ExpressionAtlas" id="O60232">
    <property type="expression patterns" value="baseline and differential"/>
</dbReference>
<dbReference type="GO" id="GO:0005737">
    <property type="term" value="C:cytoplasm"/>
    <property type="evidence" value="ECO:0007669"/>
    <property type="project" value="UniProtKB-SubCell"/>
</dbReference>
<dbReference type="GO" id="GO:0042802">
    <property type="term" value="F:identical protein binding"/>
    <property type="evidence" value="ECO:0007669"/>
    <property type="project" value="Ensembl"/>
</dbReference>
<dbReference type="GO" id="GO:0046872">
    <property type="term" value="F:metal ion binding"/>
    <property type="evidence" value="ECO:0007669"/>
    <property type="project" value="UniProtKB-KW"/>
</dbReference>
<dbReference type="GO" id="GO:0051301">
    <property type="term" value="P:cell division"/>
    <property type="evidence" value="ECO:0007669"/>
    <property type="project" value="UniProtKB-KW"/>
</dbReference>
<dbReference type="GO" id="GO:0000278">
    <property type="term" value="P:mitotic cell cycle"/>
    <property type="evidence" value="ECO:0000304"/>
    <property type="project" value="ProtInc"/>
</dbReference>
<dbReference type="InterPro" id="IPR009563">
    <property type="entry name" value="SSSCA1"/>
</dbReference>
<dbReference type="InterPro" id="IPR051888">
    <property type="entry name" value="UPF0148_domain"/>
</dbReference>
<dbReference type="PANTHER" id="PTHR16537:SF1">
    <property type="entry name" value="PROTEIN ZNRD2"/>
    <property type="match status" value="1"/>
</dbReference>
<dbReference type="PANTHER" id="PTHR16537">
    <property type="entry name" value="SJOEGREN SYNDROME/SCLERODERMA AUTOANTIGEN 1"/>
    <property type="match status" value="1"/>
</dbReference>
<dbReference type="Pfam" id="PF06677">
    <property type="entry name" value="Auto_anti-p27"/>
    <property type="match status" value="1"/>
</dbReference>
<keyword id="KW-0002">3D-structure</keyword>
<keyword id="KW-0007">Acetylation</keyword>
<keyword id="KW-0131">Cell cycle</keyword>
<keyword id="KW-0132">Cell division</keyword>
<keyword id="KW-0963">Cytoplasm</keyword>
<keyword id="KW-0479">Metal-binding</keyword>
<keyword id="KW-0498">Mitosis</keyword>
<keyword id="KW-0597">Phosphoprotein</keyword>
<keyword id="KW-1267">Proteomics identification</keyword>
<keyword id="KW-1185">Reference proteome</keyword>
<keyword id="KW-0862">Zinc</keyword>
<accession>O60232</accession>
<name>ZNRD2_HUMAN</name>
<proteinExistence type="evidence at protein level"/>
<reference key="1">
    <citation type="journal article" date="1998" name="Clin. Exp. Immunol.">
        <title>cDNA cloning of a novel autoantigen targeted by a minor subset of anti-centromere antibodies.</title>
        <authorList>
            <person name="Muro Y."/>
            <person name="Yamada T."/>
            <person name="Himeno M."/>
            <person name="Sugimoto K."/>
        </authorList>
    </citation>
    <scope>NUCLEOTIDE SEQUENCE [MRNA]</scope>
    <scope>FUNCTION</scope>
</reference>
<reference key="2">
    <citation type="journal article" date="2004" name="Genome Res.">
        <title>The status, quality, and expansion of the NIH full-length cDNA project: the Mammalian Gene Collection (MGC).</title>
        <authorList>
            <consortium name="The MGC Project Team"/>
        </authorList>
    </citation>
    <scope>NUCLEOTIDE SEQUENCE [LARGE SCALE MRNA]</scope>
    <source>
        <tissue>Ovary</tissue>
    </source>
</reference>
<reference key="3">
    <citation type="journal article" date="2007" name="Science">
        <title>ATM and ATR substrate analysis reveals extensive protein networks responsive to DNA damage.</title>
        <authorList>
            <person name="Matsuoka S."/>
            <person name="Ballif B.A."/>
            <person name="Smogorzewska A."/>
            <person name="McDonald E.R. III"/>
            <person name="Hurov K.E."/>
            <person name="Luo J."/>
            <person name="Bakalarski C.E."/>
            <person name="Zhao Z."/>
            <person name="Solimini N."/>
            <person name="Lerenthal Y."/>
            <person name="Shiloh Y."/>
            <person name="Gygi S.P."/>
            <person name="Elledge S.J."/>
        </authorList>
    </citation>
    <scope>PHOSPHORYLATION [LARGE SCALE ANALYSIS] AT SER-94</scope>
    <scope>IDENTIFICATION BY MASS SPECTROMETRY [LARGE SCALE ANALYSIS]</scope>
    <source>
        <tissue>Embryonic kidney</tissue>
    </source>
</reference>
<reference key="4">
    <citation type="journal article" date="2009" name="Anal. Chem.">
        <title>Lys-N and trypsin cover complementary parts of the phosphoproteome in a refined SCX-based approach.</title>
        <authorList>
            <person name="Gauci S."/>
            <person name="Helbig A.O."/>
            <person name="Slijper M."/>
            <person name="Krijgsveld J."/>
            <person name="Heck A.J."/>
            <person name="Mohammed S."/>
        </authorList>
    </citation>
    <scope>ACETYLATION [LARGE SCALE ANALYSIS] AT ALA-2</scope>
    <scope>CLEAVAGE OF INITIATOR METHIONINE [LARGE SCALE ANALYSIS]</scope>
    <scope>IDENTIFICATION BY MASS SPECTROMETRY [LARGE SCALE ANALYSIS]</scope>
</reference>
<reference key="5">
    <citation type="journal article" date="2011" name="BMC Syst. Biol.">
        <title>Initial characterization of the human central proteome.</title>
        <authorList>
            <person name="Burkard T.R."/>
            <person name="Planyavsky M."/>
            <person name="Kaupe I."/>
            <person name="Breitwieser F.P."/>
            <person name="Buerckstuemmer T."/>
            <person name="Bennett K.L."/>
            <person name="Superti-Furga G."/>
            <person name="Colinge J."/>
        </authorList>
    </citation>
    <scope>IDENTIFICATION BY MASS SPECTROMETRY [LARGE SCALE ANALYSIS]</scope>
</reference>
<reference key="6">
    <citation type="journal article" date="2012" name="Proc. Natl. Acad. Sci. U.S.A.">
        <title>N-terminal acetylome analyses and functional insights of the N-terminal acetyltransferase NatB.</title>
        <authorList>
            <person name="Van Damme P."/>
            <person name="Lasa M."/>
            <person name="Polevoda B."/>
            <person name="Gazquez C."/>
            <person name="Elosegui-Artola A."/>
            <person name="Kim D.S."/>
            <person name="De Juan-Pardo E."/>
            <person name="Demeyer K."/>
            <person name="Hole K."/>
            <person name="Larrea E."/>
            <person name="Timmerman E."/>
            <person name="Prieto J."/>
            <person name="Arnesen T."/>
            <person name="Sherman F."/>
            <person name="Gevaert K."/>
            <person name="Aldabe R."/>
        </authorList>
    </citation>
    <scope>ACETYLATION [LARGE SCALE ANALYSIS] AT ALA-2</scope>
    <scope>CLEAVAGE OF INITIATOR METHIONINE [LARGE SCALE ANALYSIS]</scope>
    <scope>IDENTIFICATION BY MASS SPECTROMETRY [LARGE SCALE ANALYSIS]</scope>
</reference>
<reference evidence="8" key="7">
    <citation type="journal article" date="2020" name="Commun. Biol.">
        <title>Sjoegren syndrome/scleroderma autoantigen 1 is a direct Tankyrase binding partner in cancer cells.</title>
        <authorList>
            <person name="Perdreau-Dahl H."/>
            <person name="Progida C."/>
            <person name="Barfeld S.J."/>
            <person name="Guldsten H."/>
            <person name="Thiede B."/>
            <person name="Arntzen M."/>
            <person name="Bakke O."/>
            <person name="Mills I.G."/>
            <person name="Krauss S."/>
            <person name="Morth J.P."/>
        </authorList>
    </citation>
    <scope>X-RAY CRYSTALLOGRAPHY (2.30 ANGSTROMS) IN COMPLEX WITH ZINC</scope>
    <scope>COFACTOR</scope>
    <scope>SUBUNIT</scope>
    <scope>SUBCELLULAR LOCATION</scope>
    <scope>NUCLEAR EXPORT SIGNAL</scope>
    <scope>MUTAGENESIS OF 2-ALA--ASP-148; 2-ALA--ASN-84; 85-PRO--HIS-199; 148-ASP--HIS-199; 173-SER--HIS-199; LEU-180; LEU-183; ILE-184; LEU-191; LEU-194 AND LEU-197</scope>
</reference>
<organism>
    <name type="scientific">Homo sapiens</name>
    <name type="common">Human</name>
    <dbReference type="NCBI Taxonomy" id="9606"/>
    <lineage>
        <taxon>Eukaryota</taxon>
        <taxon>Metazoa</taxon>
        <taxon>Chordata</taxon>
        <taxon>Craniata</taxon>
        <taxon>Vertebrata</taxon>
        <taxon>Euteleostomi</taxon>
        <taxon>Mammalia</taxon>
        <taxon>Eutheria</taxon>
        <taxon>Euarchontoglires</taxon>
        <taxon>Primates</taxon>
        <taxon>Haplorrhini</taxon>
        <taxon>Catarrhini</taxon>
        <taxon>Hominidae</taxon>
        <taxon>Homo</taxon>
    </lineage>
</organism>
<gene>
    <name evidence="3 7" type="primary">ZNRD2</name>
    <name evidence="3 7" type="synonym">SSSCA1</name>
</gene>